<evidence type="ECO:0000255" key="1">
    <source>
        <dbReference type="HAMAP-Rule" id="MF_01366"/>
    </source>
</evidence>
<evidence type="ECO:0000305" key="2"/>
<gene>
    <name evidence="1" type="primary">rplM</name>
    <name type="ordered locus">LMOf2365_2570</name>
</gene>
<comment type="function">
    <text evidence="1">This protein is one of the early assembly proteins of the 50S ribosomal subunit, although it is not seen to bind rRNA by itself. It is important during the early stages of 50S assembly.</text>
</comment>
<comment type="subunit">
    <text evidence="1">Part of the 50S ribosomal subunit.</text>
</comment>
<comment type="similarity">
    <text evidence="1">Belongs to the universal ribosomal protein uL13 family.</text>
</comment>
<organism>
    <name type="scientific">Listeria monocytogenes serotype 4b (strain F2365)</name>
    <dbReference type="NCBI Taxonomy" id="265669"/>
    <lineage>
        <taxon>Bacteria</taxon>
        <taxon>Bacillati</taxon>
        <taxon>Bacillota</taxon>
        <taxon>Bacilli</taxon>
        <taxon>Bacillales</taxon>
        <taxon>Listeriaceae</taxon>
        <taxon>Listeria</taxon>
    </lineage>
</organism>
<feature type="chain" id="PRO_0000261745" description="Large ribosomal subunit protein uL13">
    <location>
        <begin position="1"/>
        <end position="145"/>
    </location>
</feature>
<keyword id="KW-0687">Ribonucleoprotein</keyword>
<keyword id="KW-0689">Ribosomal protein</keyword>
<dbReference type="EMBL" id="AE017262">
    <property type="protein sequence ID" value="AAT05335.1"/>
    <property type="molecule type" value="Genomic_DNA"/>
</dbReference>
<dbReference type="RefSeq" id="WP_003727703.1">
    <property type="nucleotide sequence ID" value="NC_002973.6"/>
</dbReference>
<dbReference type="SMR" id="Q71WI1"/>
<dbReference type="GeneID" id="61190471"/>
<dbReference type="KEGG" id="lmf:LMOf2365_2570"/>
<dbReference type="HOGENOM" id="CLU_082184_2_2_9"/>
<dbReference type="GO" id="GO:0022625">
    <property type="term" value="C:cytosolic large ribosomal subunit"/>
    <property type="evidence" value="ECO:0007669"/>
    <property type="project" value="TreeGrafter"/>
</dbReference>
<dbReference type="GO" id="GO:0003729">
    <property type="term" value="F:mRNA binding"/>
    <property type="evidence" value="ECO:0007669"/>
    <property type="project" value="TreeGrafter"/>
</dbReference>
<dbReference type="GO" id="GO:0003735">
    <property type="term" value="F:structural constituent of ribosome"/>
    <property type="evidence" value="ECO:0007669"/>
    <property type="project" value="InterPro"/>
</dbReference>
<dbReference type="GO" id="GO:0017148">
    <property type="term" value="P:negative regulation of translation"/>
    <property type="evidence" value="ECO:0007669"/>
    <property type="project" value="TreeGrafter"/>
</dbReference>
<dbReference type="GO" id="GO:0006412">
    <property type="term" value="P:translation"/>
    <property type="evidence" value="ECO:0007669"/>
    <property type="project" value="UniProtKB-UniRule"/>
</dbReference>
<dbReference type="CDD" id="cd00392">
    <property type="entry name" value="Ribosomal_L13"/>
    <property type="match status" value="1"/>
</dbReference>
<dbReference type="FunFam" id="3.90.1180.10:FF:000001">
    <property type="entry name" value="50S ribosomal protein L13"/>
    <property type="match status" value="1"/>
</dbReference>
<dbReference type="Gene3D" id="3.90.1180.10">
    <property type="entry name" value="Ribosomal protein L13"/>
    <property type="match status" value="1"/>
</dbReference>
<dbReference type="HAMAP" id="MF_01366">
    <property type="entry name" value="Ribosomal_uL13"/>
    <property type="match status" value="1"/>
</dbReference>
<dbReference type="InterPro" id="IPR005822">
    <property type="entry name" value="Ribosomal_uL13"/>
</dbReference>
<dbReference type="InterPro" id="IPR005823">
    <property type="entry name" value="Ribosomal_uL13_bac-type"/>
</dbReference>
<dbReference type="InterPro" id="IPR023563">
    <property type="entry name" value="Ribosomal_uL13_CS"/>
</dbReference>
<dbReference type="InterPro" id="IPR036899">
    <property type="entry name" value="Ribosomal_uL13_sf"/>
</dbReference>
<dbReference type="NCBIfam" id="TIGR01066">
    <property type="entry name" value="rplM_bact"/>
    <property type="match status" value="1"/>
</dbReference>
<dbReference type="PANTHER" id="PTHR11545:SF2">
    <property type="entry name" value="LARGE RIBOSOMAL SUBUNIT PROTEIN UL13M"/>
    <property type="match status" value="1"/>
</dbReference>
<dbReference type="PANTHER" id="PTHR11545">
    <property type="entry name" value="RIBOSOMAL PROTEIN L13"/>
    <property type="match status" value="1"/>
</dbReference>
<dbReference type="Pfam" id="PF00572">
    <property type="entry name" value="Ribosomal_L13"/>
    <property type="match status" value="1"/>
</dbReference>
<dbReference type="PIRSF" id="PIRSF002181">
    <property type="entry name" value="Ribosomal_L13"/>
    <property type="match status" value="1"/>
</dbReference>
<dbReference type="SUPFAM" id="SSF52161">
    <property type="entry name" value="Ribosomal protein L13"/>
    <property type="match status" value="1"/>
</dbReference>
<dbReference type="PROSITE" id="PS00783">
    <property type="entry name" value="RIBOSOMAL_L13"/>
    <property type="match status" value="1"/>
</dbReference>
<sequence length="145" mass="16200">MRTTYMAKPGEVERKWYVIDATGVSLGRLSSEVASILRGKNKPQFTPHIDTGDFVIIINAGKIGLTGKKATDKIYYRHSQYPGGLKSRTAGEMRTNNPEKLLELSIKGMLPKNSLGRQLFKKLHVYGGSEHEHAAQQPEVYELRG</sequence>
<protein>
    <recommendedName>
        <fullName evidence="1">Large ribosomal subunit protein uL13</fullName>
    </recommendedName>
    <alternativeName>
        <fullName evidence="2">50S ribosomal protein L13</fullName>
    </alternativeName>
</protein>
<proteinExistence type="inferred from homology"/>
<accession>Q71WI1</accession>
<name>RL13_LISMF</name>
<reference key="1">
    <citation type="journal article" date="2004" name="Nucleic Acids Res.">
        <title>Whole genome comparisons of serotype 4b and 1/2a strains of the food-borne pathogen Listeria monocytogenes reveal new insights into the core genome components of this species.</title>
        <authorList>
            <person name="Nelson K.E."/>
            <person name="Fouts D.E."/>
            <person name="Mongodin E.F."/>
            <person name="Ravel J."/>
            <person name="DeBoy R.T."/>
            <person name="Kolonay J.F."/>
            <person name="Rasko D.A."/>
            <person name="Angiuoli S.V."/>
            <person name="Gill S.R."/>
            <person name="Paulsen I.T."/>
            <person name="Peterson J.D."/>
            <person name="White O."/>
            <person name="Nelson W.C."/>
            <person name="Nierman W.C."/>
            <person name="Beanan M.J."/>
            <person name="Brinkac L.M."/>
            <person name="Daugherty S.C."/>
            <person name="Dodson R.J."/>
            <person name="Durkin A.S."/>
            <person name="Madupu R."/>
            <person name="Haft D.H."/>
            <person name="Selengut J."/>
            <person name="Van Aken S.E."/>
            <person name="Khouri H.M."/>
            <person name="Fedorova N."/>
            <person name="Forberger H.A."/>
            <person name="Tran B."/>
            <person name="Kathariou S."/>
            <person name="Wonderling L.D."/>
            <person name="Uhlich G.A."/>
            <person name="Bayles D.O."/>
            <person name="Luchansky J.B."/>
            <person name="Fraser C.M."/>
        </authorList>
    </citation>
    <scope>NUCLEOTIDE SEQUENCE [LARGE SCALE GENOMIC DNA]</scope>
    <source>
        <strain>F2365</strain>
    </source>
</reference>